<gene>
    <name evidence="1" type="primary">cmk</name>
    <name type="ordered locus">SE_1166</name>
</gene>
<dbReference type="EC" id="2.7.4.25" evidence="1"/>
<dbReference type="EMBL" id="AE015929">
    <property type="protein sequence ID" value="AAO04763.1"/>
    <property type="molecule type" value="Genomic_DNA"/>
</dbReference>
<dbReference type="RefSeq" id="NP_764721.1">
    <property type="nucleotide sequence ID" value="NC_004461.1"/>
</dbReference>
<dbReference type="RefSeq" id="WP_001830943.1">
    <property type="nucleotide sequence ID" value="NZ_WBME01000006.1"/>
</dbReference>
<dbReference type="SMR" id="Q8CSH5"/>
<dbReference type="GeneID" id="50018714"/>
<dbReference type="KEGG" id="sep:SE_1166"/>
<dbReference type="PATRIC" id="fig|176280.10.peg.1138"/>
<dbReference type="eggNOG" id="COG0283">
    <property type="taxonomic scope" value="Bacteria"/>
</dbReference>
<dbReference type="HOGENOM" id="CLU_079959_0_2_9"/>
<dbReference type="OrthoDB" id="9807434at2"/>
<dbReference type="Proteomes" id="UP000001411">
    <property type="component" value="Chromosome"/>
</dbReference>
<dbReference type="GO" id="GO:0005829">
    <property type="term" value="C:cytosol"/>
    <property type="evidence" value="ECO:0007669"/>
    <property type="project" value="TreeGrafter"/>
</dbReference>
<dbReference type="GO" id="GO:0005524">
    <property type="term" value="F:ATP binding"/>
    <property type="evidence" value="ECO:0007669"/>
    <property type="project" value="UniProtKB-UniRule"/>
</dbReference>
<dbReference type="GO" id="GO:0036430">
    <property type="term" value="F:CMP kinase activity"/>
    <property type="evidence" value="ECO:0007669"/>
    <property type="project" value="RHEA"/>
</dbReference>
<dbReference type="GO" id="GO:0036431">
    <property type="term" value="F:dCMP kinase activity"/>
    <property type="evidence" value="ECO:0007669"/>
    <property type="project" value="RHEA"/>
</dbReference>
<dbReference type="GO" id="GO:0015949">
    <property type="term" value="P:nucleobase-containing small molecule interconversion"/>
    <property type="evidence" value="ECO:0007669"/>
    <property type="project" value="TreeGrafter"/>
</dbReference>
<dbReference type="GO" id="GO:0006220">
    <property type="term" value="P:pyrimidine nucleotide metabolic process"/>
    <property type="evidence" value="ECO:0007669"/>
    <property type="project" value="UniProtKB-UniRule"/>
</dbReference>
<dbReference type="CDD" id="cd02020">
    <property type="entry name" value="CMPK"/>
    <property type="match status" value="1"/>
</dbReference>
<dbReference type="Gene3D" id="3.40.50.300">
    <property type="entry name" value="P-loop containing nucleotide triphosphate hydrolases"/>
    <property type="match status" value="1"/>
</dbReference>
<dbReference type="HAMAP" id="MF_00238">
    <property type="entry name" value="Cytidyl_kinase_type1"/>
    <property type="match status" value="1"/>
</dbReference>
<dbReference type="InterPro" id="IPR003136">
    <property type="entry name" value="Cytidylate_kin"/>
</dbReference>
<dbReference type="InterPro" id="IPR011994">
    <property type="entry name" value="Cytidylate_kinase_dom"/>
</dbReference>
<dbReference type="InterPro" id="IPR027417">
    <property type="entry name" value="P-loop_NTPase"/>
</dbReference>
<dbReference type="NCBIfam" id="TIGR00017">
    <property type="entry name" value="cmk"/>
    <property type="match status" value="1"/>
</dbReference>
<dbReference type="PANTHER" id="PTHR21299:SF2">
    <property type="entry name" value="CYTIDYLATE KINASE"/>
    <property type="match status" value="1"/>
</dbReference>
<dbReference type="PANTHER" id="PTHR21299">
    <property type="entry name" value="CYTIDYLATE KINASE/PANTOATE-BETA-ALANINE LIGASE"/>
    <property type="match status" value="1"/>
</dbReference>
<dbReference type="Pfam" id="PF02224">
    <property type="entry name" value="Cytidylate_kin"/>
    <property type="match status" value="1"/>
</dbReference>
<dbReference type="SUPFAM" id="SSF52540">
    <property type="entry name" value="P-loop containing nucleoside triphosphate hydrolases"/>
    <property type="match status" value="1"/>
</dbReference>
<accession>Q8CSH5</accession>
<keyword id="KW-0067">ATP-binding</keyword>
<keyword id="KW-0963">Cytoplasm</keyword>
<keyword id="KW-0418">Kinase</keyword>
<keyword id="KW-0547">Nucleotide-binding</keyword>
<keyword id="KW-0808">Transferase</keyword>
<evidence type="ECO:0000255" key="1">
    <source>
        <dbReference type="HAMAP-Rule" id="MF_00238"/>
    </source>
</evidence>
<sequence length="215" mass="24254">MSSINIALDGPAAAGKSTIAKRVASRLSMIYVDTGAMYRAITYKYLQNGKPENFDYLINNTKLELTYDEVKGQRILLDNQDVTDYLRENDVTHHVSYVASKEPVRSFAVKIQKELAAKKGIVMDGRDIGTVVLPDAELKVYMIASVAERAERRQKENEQRGIESNLEQLKEEIEARDHYDMNREISPLQKAEDAITLDTTGKSIEEVTNEILSLL</sequence>
<protein>
    <recommendedName>
        <fullName evidence="1">Cytidylate kinase</fullName>
        <shortName evidence="1">CK</shortName>
        <ecNumber evidence="1">2.7.4.25</ecNumber>
    </recommendedName>
    <alternativeName>
        <fullName evidence="1">Cytidine monophosphate kinase</fullName>
        <shortName evidence="1">CMP kinase</shortName>
    </alternativeName>
</protein>
<proteinExistence type="inferred from homology"/>
<comment type="catalytic activity">
    <reaction evidence="1">
        <text>CMP + ATP = CDP + ADP</text>
        <dbReference type="Rhea" id="RHEA:11600"/>
        <dbReference type="ChEBI" id="CHEBI:30616"/>
        <dbReference type="ChEBI" id="CHEBI:58069"/>
        <dbReference type="ChEBI" id="CHEBI:60377"/>
        <dbReference type="ChEBI" id="CHEBI:456216"/>
        <dbReference type="EC" id="2.7.4.25"/>
    </reaction>
</comment>
<comment type="catalytic activity">
    <reaction evidence="1">
        <text>dCMP + ATP = dCDP + ADP</text>
        <dbReference type="Rhea" id="RHEA:25094"/>
        <dbReference type="ChEBI" id="CHEBI:30616"/>
        <dbReference type="ChEBI" id="CHEBI:57566"/>
        <dbReference type="ChEBI" id="CHEBI:58593"/>
        <dbReference type="ChEBI" id="CHEBI:456216"/>
        <dbReference type="EC" id="2.7.4.25"/>
    </reaction>
</comment>
<comment type="subcellular location">
    <subcellularLocation>
        <location evidence="1">Cytoplasm</location>
    </subcellularLocation>
</comment>
<comment type="similarity">
    <text evidence="1">Belongs to the cytidylate kinase family. Type 1 subfamily.</text>
</comment>
<feature type="chain" id="PRO_0000131978" description="Cytidylate kinase">
    <location>
        <begin position="1"/>
        <end position="215"/>
    </location>
</feature>
<feature type="binding site" evidence="1">
    <location>
        <begin position="10"/>
        <end position="18"/>
    </location>
    <ligand>
        <name>ATP</name>
        <dbReference type="ChEBI" id="CHEBI:30616"/>
    </ligand>
</feature>
<reference key="1">
    <citation type="journal article" date="2003" name="Mol. Microbiol.">
        <title>Genome-based analysis of virulence genes in a non-biofilm-forming Staphylococcus epidermidis strain (ATCC 12228).</title>
        <authorList>
            <person name="Zhang Y.-Q."/>
            <person name="Ren S.-X."/>
            <person name="Li H.-L."/>
            <person name="Wang Y.-X."/>
            <person name="Fu G."/>
            <person name="Yang J."/>
            <person name="Qin Z.-Q."/>
            <person name="Miao Y.-G."/>
            <person name="Wang W.-Y."/>
            <person name="Chen R.-S."/>
            <person name="Shen Y."/>
            <person name="Chen Z."/>
            <person name="Yuan Z.-H."/>
            <person name="Zhao G.-P."/>
            <person name="Qu D."/>
            <person name="Danchin A."/>
            <person name="Wen Y.-M."/>
        </authorList>
    </citation>
    <scope>NUCLEOTIDE SEQUENCE [LARGE SCALE GENOMIC DNA]</scope>
    <source>
        <strain>ATCC 12228 / FDA PCI 1200</strain>
    </source>
</reference>
<name>KCY_STAES</name>
<organism>
    <name type="scientific">Staphylococcus epidermidis (strain ATCC 12228 / FDA PCI 1200)</name>
    <dbReference type="NCBI Taxonomy" id="176280"/>
    <lineage>
        <taxon>Bacteria</taxon>
        <taxon>Bacillati</taxon>
        <taxon>Bacillota</taxon>
        <taxon>Bacilli</taxon>
        <taxon>Bacillales</taxon>
        <taxon>Staphylococcaceae</taxon>
        <taxon>Staphylococcus</taxon>
    </lineage>
</organism>